<gene>
    <name type="primary">flgM</name>
    <name type="ordered locus">b1071</name>
    <name type="ordered locus">JW1058</name>
</gene>
<name>FLGM_ECOLI</name>
<feature type="chain" id="PRO_0000087283" description="Negative regulator of flagellin synthesis">
    <location>
        <begin position="1"/>
        <end position="97"/>
    </location>
</feature>
<feature type="region of interest" description="Disordered" evidence="1">
    <location>
        <begin position="1"/>
        <end position="39"/>
    </location>
</feature>
<feature type="compositionally biased region" description="Low complexity" evidence="1">
    <location>
        <begin position="26"/>
        <end position="39"/>
    </location>
</feature>
<protein>
    <recommendedName>
        <fullName>Negative regulator of flagellin synthesis</fullName>
    </recommendedName>
    <alternativeName>
        <fullName>Anti-sigma-28 factor</fullName>
    </alternativeName>
</protein>
<reference key="1">
    <citation type="submission" date="1995-01" db="EMBL/GenBank/DDBJ databases">
        <title>Regulation of class II motility genes in Escherichia coli.</title>
        <authorList>
            <person name="Mytelka D.S."/>
            <person name="Chamberlin M.J."/>
        </authorList>
    </citation>
    <scope>NUCLEOTIDE SEQUENCE [GENOMIC DNA]</scope>
</reference>
<reference key="2">
    <citation type="journal article" date="1996" name="DNA Res.">
        <title>A 718-kb DNA sequence of the Escherichia coli K-12 genome corresponding to the 12.7-28.0 min region on the linkage map.</title>
        <authorList>
            <person name="Oshima T."/>
            <person name="Aiba H."/>
            <person name="Baba T."/>
            <person name="Fujita K."/>
            <person name="Hayashi K."/>
            <person name="Honjo A."/>
            <person name="Ikemoto K."/>
            <person name="Inada T."/>
            <person name="Itoh T."/>
            <person name="Kajihara M."/>
            <person name="Kanai K."/>
            <person name="Kashimoto K."/>
            <person name="Kimura S."/>
            <person name="Kitagawa M."/>
            <person name="Makino K."/>
            <person name="Masuda S."/>
            <person name="Miki T."/>
            <person name="Mizobuchi K."/>
            <person name="Mori H."/>
            <person name="Motomura K."/>
            <person name="Nakamura Y."/>
            <person name="Nashimoto H."/>
            <person name="Nishio Y."/>
            <person name="Saito N."/>
            <person name="Sampei G."/>
            <person name="Seki Y."/>
            <person name="Tagami H."/>
            <person name="Takemoto K."/>
            <person name="Wada C."/>
            <person name="Yamamoto Y."/>
            <person name="Yano M."/>
            <person name="Horiuchi T."/>
        </authorList>
    </citation>
    <scope>NUCLEOTIDE SEQUENCE [LARGE SCALE GENOMIC DNA]</scope>
    <source>
        <strain>K12 / W3110 / ATCC 27325 / DSM 5911</strain>
    </source>
</reference>
<reference key="3">
    <citation type="journal article" date="1997" name="Science">
        <title>The complete genome sequence of Escherichia coli K-12.</title>
        <authorList>
            <person name="Blattner F.R."/>
            <person name="Plunkett G. III"/>
            <person name="Bloch C.A."/>
            <person name="Perna N.T."/>
            <person name="Burland V."/>
            <person name="Riley M."/>
            <person name="Collado-Vides J."/>
            <person name="Glasner J.D."/>
            <person name="Rode C.K."/>
            <person name="Mayhew G.F."/>
            <person name="Gregor J."/>
            <person name="Davis N.W."/>
            <person name="Kirkpatrick H.A."/>
            <person name="Goeden M.A."/>
            <person name="Rose D.J."/>
            <person name="Mau B."/>
            <person name="Shao Y."/>
        </authorList>
    </citation>
    <scope>NUCLEOTIDE SEQUENCE [LARGE SCALE GENOMIC DNA]</scope>
    <source>
        <strain>K12 / MG1655 / ATCC 47076</strain>
    </source>
</reference>
<reference key="4">
    <citation type="journal article" date="2006" name="Mol. Syst. Biol.">
        <title>Highly accurate genome sequences of Escherichia coli K-12 strains MG1655 and W3110.</title>
        <authorList>
            <person name="Hayashi K."/>
            <person name="Morooka N."/>
            <person name="Yamamoto Y."/>
            <person name="Fujita K."/>
            <person name="Isono K."/>
            <person name="Choi S."/>
            <person name="Ohtsubo E."/>
            <person name="Baba T."/>
            <person name="Wanner B.L."/>
            <person name="Mori H."/>
            <person name="Horiuchi T."/>
        </authorList>
    </citation>
    <scope>NUCLEOTIDE SEQUENCE [LARGE SCALE GENOMIC DNA]</scope>
    <source>
        <strain>K12 / W3110 / ATCC 27325 / DSM 5911</strain>
    </source>
</reference>
<reference key="5">
    <citation type="journal article" date="1997" name="Nat. Struct. Biol.">
        <title>The C-terminal half of the anti-sigma factor, FlgM, becomes structured when bound to its target, sigma 28.</title>
        <authorList>
            <person name="Daughdrill G.W."/>
            <person name="Chadsey M.S."/>
            <person name="Karlinsey J.E."/>
            <person name="Hughes K.T."/>
            <person name="Dahlquist F.W."/>
        </authorList>
    </citation>
    <scope>STRUCTURE BY NMR</scope>
</reference>
<sequence length="97" mass="10341">MSIDRTSPLKPVSTVQPRETTDAPVTNSRAAKTTASTSTSVTLSDAQAKLMQPGSSDINLERVEALKLAIRNGELKMDTGKIADALINEAQQDLQSN</sequence>
<dbReference type="EMBL" id="U19773">
    <property type="protein sequence ID" value="AAA61762.1"/>
    <property type="molecule type" value="Genomic_DNA"/>
</dbReference>
<dbReference type="EMBL" id="U00096">
    <property type="protein sequence ID" value="AAC74155.1"/>
    <property type="molecule type" value="Genomic_DNA"/>
</dbReference>
<dbReference type="EMBL" id="AP009048">
    <property type="protein sequence ID" value="BAA35879.1"/>
    <property type="molecule type" value="Genomic_DNA"/>
</dbReference>
<dbReference type="PIR" id="D64850">
    <property type="entry name" value="D64850"/>
</dbReference>
<dbReference type="RefSeq" id="NP_415589.1">
    <property type="nucleotide sequence ID" value="NC_000913.3"/>
</dbReference>
<dbReference type="RefSeq" id="WP_000020880.1">
    <property type="nucleotide sequence ID" value="NZ_STEB01000016.1"/>
</dbReference>
<dbReference type="SMR" id="P0AEM4"/>
<dbReference type="BioGRID" id="4263238">
    <property type="interactions" value="7"/>
</dbReference>
<dbReference type="BioGRID" id="851026">
    <property type="interactions" value="1"/>
</dbReference>
<dbReference type="FunCoup" id="P0AEM4">
    <property type="interactions" value="183"/>
</dbReference>
<dbReference type="IntAct" id="P0AEM4">
    <property type="interactions" value="13"/>
</dbReference>
<dbReference type="STRING" id="511145.b1071"/>
<dbReference type="jPOST" id="P0AEM4"/>
<dbReference type="PaxDb" id="511145-b1071"/>
<dbReference type="EnsemblBacteria" id="AAC74155">
    <property type="protein sequence ID" value="AAC74155"/>
    <property type="gene ID" value="b1071"/>
</dbReference>
<dbReference type="GeneID" id="75203658"/>
<dbReference type="GeneID" id="946684"/>
<dbReference type="KEGG" id="ecj:JW1058"/>
<dbReference type="KEGG" id="eco:b1071"/>
<dbReference type="KEGG" id="ecoc:C3026_06500"/>
<dbReference type="PATRIC" id="fig|1411691.4.peg.1197"/>
<dbReference type="EchoBASE" id="EB2530"/>
<dbReference type="eggNOG" id="COG2747">
    <property type="taxonomic scope" value="Bacteria"/>
</dbReference>
<dbReference type="HOGENOM" id="CLU_149304_2_2_6"/>
<dbReference type="InParanoid" id="P0AEM4"/>
<dbReference type="OMA" id="QSKLMQP"/>
<dbReference type="OrthoDB" id="7062942at2"/>
<dbReference type="PhylomeDB" id="P0AEM4"/>
<dbReference type="BioCyc" id="EcoCyc:G369-MONOMER"/>
<dbReference type="PRO" id="PR:P0AEM4"/>
<dbReference type="Proteomes" id="UP000000625">
    <property type="component" value="Chromosome"/>
</dbReference>
<dbReference type="GO" id="GO:0016989">
    <property type="term" value="F:sigma factor antagonist activity"/>
    <property type="evidence" value="ECO:0000315"/>
    <property type="project" value="EcoCyc"/>
</dbReference>
<dbReference type="GO" id="GO:0044781">
    <property type="term" value="P:bacterial-type flagellum organization"/>
    <property type="evidence" value="ECO:0007669"/>
    <property type="project" value="UniProtKB-KW"/>
</dbReference>
<dbReference type="GO" id="GO:0045861">
    <property type="term" value="P:negative regulation of proteolysis"/>
    <property type="evidence" value="ECO:0000315"/>
    <property type="project" value="EcoCyc"/>
</dbReference>
<dbReference type="InterPro" id="IPR035890">
    <property type="entry name" value="Anti-sigma-28_factor_FlgM_sf"/>
</dbReference>
<dbReference type="InterPro" id="IPR007412">
    <property type="entry name" value="FlgM"/>
</dbReference>
<dbReference type="InterPro" id="IPR031316">
    <property type="entry name" value="FlgM_C"/>
</dbReference>
<dbReference type="NCBIfam" id="TIGR03824">
    <property type="entry name" value="FlgM_jcvi"/>
    <property type="match status" value="1"/>
</dbReference>
<dbReference type="Pfam" id="PF04316">
    <property type="entry name" value="FlgM"/>
    <property type="match status" value="1"/>
</dbReference>
<dbReference type="SUPFAM" id="SSF101498">
    <property type="entry name" value="Anti-sigma factor FlgM"/>
    <property type="match status" value="1"/>
</dbReference>
<accession>P0AEM4</accession>
<accession>P43532</accession>
<evidence type="ECO:0000256" key="1">
    <source>
        <dbReference type="SAM" id="MobiDB-lite"/>
    </source>
</evidence>
<evidence type="ECO:0000305" key="2"/>
<keyword id="KW-1005">Bacterial flagellum biogenesis</keyword>
<keyword id="KW-1185">Reference proteome</keyword>
<keyword id="KW-0678">Repressor</keyword>
<keyword id="KW-0804">Transcription</keyword>
<keyword id="KW-0805">Transcription regulation</keyword>
<comment type="function">
    <text>Responsible for the coupling of flagellin expression to flagellar assembly by preventing expression of the flagellin genes when a component of the middle class of proteins is defective. It negatively regulates flagellar genes by inhibiting the activity of FliA by directly binding to FliA.</text>
</comment>
<comment type="interaction">
    <interactant intactId="EBI-1121952">
        <id>P0AEM4</id>
    </interactant>
    <interactant intactId="EBI-549807">
        <id>P0AEM6</id>
        <label>fliA</label>
    </interactant>
    <organismsDiffer>false</organismsDiffer>
    <experiments>4</experiments>
</comment>
<comment type="similarity">
    <text evidence="2">Belongs to the FlgM family.</text>
</comment>
<proteinExistence type="evidence at protein level"/>
<organism>
    <name type="scientific">Escherichia coli (strain K12)</name>
    <dbReference type="NCBI Taxonomy" id="83333"/>
    <lineage>
        <taxon>Bacteria</taxon>
        <taxon>Pseudomonadati</taxon>
        <taxon>Pseudomonadota</taxon>
        <taxon>Gammaproteobacteria</taxon>
        <taxon>Enterobacterales</taxon>
        <taxon>Enterobacteriaceae</taxon>
        <taxon>Escherichia</taxon>
    </lineage>
</organism>